<reference key="1">
    <citation type="journal article" date="2009" name="J. Bacteriol.">
        <title>Role of conjugative elements in the evolution of the multidrug-resistant pandemic clone Streptococcus pneumoniae Spain23F ST81.</title>
        <authorList>
            <person name="Croucher N.J."/>
            <person name="Walker D."/>
            <person name="Romero P."/>
            <person name="Lennard N."/>
            <person name="Paterson G.K."/>
            <person name="Bason N.C."/>
            <person name="Mitchell A.M."/>
            <person name="Quail M.A."/>
            <person name="Andrew P.W."/>
            <person name="Parkhill J."/>
            <person name="Bentley S.D."/>
            <person name="Mitchell T.J."/>
        </authorList>
    </citation>
    <scope>NUCLEOTIDE SEQUENCE [LARGE SCALE GENOMIC DNA]</scope>
    <source>
        <strain>ATCC 700669 / Spain 23F-1</strain>
    </source>
</reference>
<gene>
    <name evidence="1" type="primary">trhO</name>
    <name type="ordered locus">SPN23F01050</name>
</gene>
<protein>
    <recommendedName>
        <fullName evidence="1">tRNA uridine(34) hydroxylase</fullName>
        <ecNumber evidence="1">1.14.-.-</ecNumber>
    </recommendedName>
    <alternativeName>
        <fullName evidence="1">tRNA hydroxylation protein O</fullName>
    </alternativeName>
</protein>
<evidence type="ECO:0000255" key="1">
    <source>
        <dbReference type="HAMAP-Rule" id="MF_00469"/>
    </source>
</evidence>
<name>TRHO_STRPJ</name>
<dbReference type="EC" id="1.14.-.-" evidence="1"/>
<dbReference type="EMBL" id="FM211187">
    <property type="protein sequence ID" value="CAR67963.1"/>
    <property type="molecule type" value="Genomic_DNA"/>
</dbReference>
<dbReference type="RefSeq" id="WP_001030031.1">
    <property type="nucleotide sequence ID" value="NC_011900.1"/>
</dbReference>
<dbReference type="SMR" id="B8ZJY0"/>
<dbReference type="KEGG" id="sne:SPN23F01050"/>
<dbReference type="HOGENOM" id="CLU_038878_1_0_9"/>
<dbReference type="GO" id="GO:0016705">
    <property type="term" value="F:oxidoreductase activity, acting on paired donors, with incorporation or reduction of molecular oxygen"/>
    <property type="evidence" value="ECO:0007669"/>
    <property type="project" value="UniProtKB-UniRule"/>
</dbReference>
<dbReference type="GO" id="GO:0006400">
    <property type="term" value="P:tRNA modification"/>
    <property type="evidence" value="ECO:0007669"/>
    <property type="project" value="UniProtKB-UniRule"/>
</dbReference>
<dbReference type="CDD" id="cd01518">
    <property type="entry name" value="RHOD_YceA"/>
    <property type="match status" value="1"/>
</dbReference>
<dbReference type="Gene3D" id="3.30.70.100">
    <property type="match status" value="1"/>
</dbReference>
<dbReference type="Gene3D" id="3.40.250.10">
    <property type="entry name" value="Rhodanese-like domain"/>
    <property type="match status" value="1"/>
</dbReference>
<dbReference type="HAMAP" id="MF_00469">
    <property type="entry name" value="TrhO"/>
    <property type="match status" value="1"/>
</dbReference>
<dbReference type="InterPro" id="IPR001763">
    <property type="entry name" value="Rhodanese-like_dom"/>
</dbReference>
<dbReference type="InterPro" id="IPR036873">
    <property type="entry name" value="Rhodanese-like_dom_sf"/>
</dbReference>
<dbReference type="InterPro" id="IPR022111">
    <property type="entry name" value="Rhodanese_C"/>
</dbReference>
<dbReference type="InterPro" id="IPR020936">
    <property type="entry name" value="TrhO"/>
</dbReference>
<dbReference type="InterPro" id="IPR040503">
    <property type="entry name" value="TRHO_N"/>
</dbReference>
<dbReference type="NCBIfam" id="NF001135">
    <property type="entry name" value="PRK00142.1-3"/>
    <property type="match status" value="1"/>
</dbReference>
<dbReference type="NCBIfam" id="NF001137">
    <property type="entry name" value="PRK00142.1-5"/>
    <property type="match status" value="1"/>
</dbReference>
<dbReference type="PANTHER" id="PTHR43268:SF3">
    <property type="entry name" value="RHODANESE-LIKE DOMAIN-CONTAINING PROTEIN 7-RELATED"/>
    <property type="match status" value="1"/>
</dbReference>
<dbReference type="PANTHER" id="PTHR43268">
    <property type="entry name" value="THIOSULFATE SULFURTRANSFERASE/RHODANESE-LIKE DOMAIN-CONTAINING PROTEIN 2"/>
    <property type="match status" value="1"/>
</dbReference>
<dbReference type="Pfam" id="PF00581">
    <property type="entry name" value="Rhodanese"/>
    <property type="match status" value="1"/>
</dbReference>
<dbReference type="Pfam" id="PF12368">
    <property type="entry name" value="Rhodanese_C"/>
    <property type="match status" value="1"/>
</dbReference>
<dbReference type="Pfam" id="PF17773">
    <property type="entry name" value="UPF0176_N"/>
    <property type="match status" value="1"/>
</dbReference>
<dbReference type="SMART" id="SM00450">
    <property type="entry name" value="RHOD"/>
    <property type="match status" value="1"/>
</dbReference>
<dbReference type="SUPFAM" id="SSF52821">
    <property type="entry name" value="Rhodanese/Cell cycle control phosphatase"/>
    <property type="match status" value="1"/>
</dbReference>
<dbReference type="PROSITE" id="PS50206">
    <property type="entry name" value="RHODANESE_3"/>
    <property type="match status" value="1"/>
</dbReference>
<proteinExistence type="inferred from homology"/>
<comment type="function">
    <text evidence="1">Catalyzes oxygen-dependent 5-hydroxyuridine (ho5U) modification at position 34 in tRNAs.</text>
</comment>
<comment type="catalytic activity">
    <reaction evidence="1">
        <text>uridine(34) in tRNA + AH2 + O2 = 5-hydroxyuridine(34) in tRNA + A + H2O</text>
        <dbReference type="Rhea" id="RHEA:64224"/>
        <dbReference type="Rhea" id="RHEA-COMP:11727"/>
        <dbReference type="Rhea" id="RHEA-COMP:13381"/>
        <dbReference type="ChEBI" id="CHEBI:13193"/>
        <dbReference type="ChEBI" id="CHEBI:15377"/>
        <dbReference type="ChEBI" id="CHEBI:15379"/>
        <dbReference type="ChEBI" id="CHEBI:17499"/>
        <dbReference type="ChEBI" id="CHEBI:65315"/>
        <dbReference type="ChEBI" id="CHEBI:136877"/>
    </reaction>
</comment>
<comment type="similarity">
    <text evidence="1">Belongs to the TrhO family.</text>
</comment>
<organism>
    <name type="scientific">Streptococcus pneumoniae (strain ATCC 700669 / Spain 23F-1)</name>
    <dbReference type="NCBI Taxonomy" id="561276"/>
    <lineage>
        <taxon>Bacteria</taxon>
        <taxon>Bacillati</taxon>
        <taxon>Bacillota</taxon>
        <taxon>Bacilli</taxon>
        <taxon>Lactobacillales</taxon>
        <taxon>Streptococcaceae</taxon>
        <taxon>Streptococcus</taxon>
    </lineage>
</organism>
<accession>B8ZJY0</accession>
<feature type="chain" id="PRO_1000135478" description="tRNA uridine(34) hydroxylase">
    <location>
        <begin position="1"/>
        <end position="328"/>
    </location>
</feature>
<feature type="domain" description="Rhodanese" evidence="1">
    <location>
        <begin position="130"/>
        <end position="224"/>
    </location>
</feature>
<feature type="active site" description="Cysteine persulfide intermediate" evidence="1">
    <location>
        <position position="184"/>
    </location>
</feature>
<keyword id="KW-0560">Oxidoreductase</keyword>
<keyword id="KW-0819">tRNA processing</keyword>
<sequence length="328" mass="37906">MAKDIRVLLYYLYTPIENAEQFAADHLAFCKSIGLKGRILVADEGINGTVSGDYETTQKYMDYVHSLPGMEELWFKIDEENEQAFKKMFVRYKKEIVHLGLEDNDFDNDINPLETTGAYLSPKEFKEALLDKDTVVLDTRNDYEYDLGHFRGAIRPDIRNFRELPQWVRDNKEKFMDKRVVVYCTGGVRCEKFSGWMVREGYKDVGQLHGGIATYGKDPEVQGELWDGKMYVFDERIAVDVNHVNPTIVGKDWFDGTPCERYVNCGNPFCNRRILTSEENEDKYLRGCSHECRVHPRNRYVSKNELTQAEVIERLAAIGESLDQAATV</sequence>